<sequence length="1486" mass="171008">MTKANGAEQLADWKFQYDLLTNELFHLHEFTSLLEFDPAFRHESDSFARFLADKHLELRMEEDAGAPGLEESSAMRRIRRRQKRGRGEEEGNALLKGVEELVEQKYADLRARLDRPMLKQGPRKRKQPGDAAKTALPHDSKKRKSAVVRKETNDEEHLKEEKSASPTVWSPESPQRDTYRTIHPSGDHEGYQSSSSDSFYFTTSSEDEEPTVKRSLKRKKAPVRRIKLIVHPPKQTVTNPLHILKPECSSLHEFLQSYKSLDEDISIEEFDSYIASQRKVVSAIRKGLKSGVLTYDRHTDSIQGISLKDVQNSQANKPEPITTFYQEQEKHTLRDHLNNHGVVMSRMFQDRKRGRIARARKISQMIEQHFKHVAGAEERKTKEEEKRRRALARAAVQAVKKRWNLAERAYKVLKKDEEDQLKRIQGKEHLSKMLEQSTQLLGAQLNQNDDSDDETSSQVLSENESSLGDEEMSSSSELDDSEVEAGEDDSKLTVEQLRAKYSALEHITIDGRSQNSEVSSMTENPEEDPQEYKILLSEREKAELHRTFETEENNILDEDHSSSSSFSESEISQTSSSENESLINSNSSQTPGLASLFGNVAEELSDDAHYSTEESLSSTPNEDQEGVQPNADAVSNMEIDSLEMQDKDESTNLEKLSVVDVPVPPLLRGTLRTYQKQGLNWLASLYNNNTNGILADEMGLGKTIQTIALLAYLACEKENWGPHLIIVPTSVLLNWEMEFKRFAPGFKVLSYYGSPQQRKEKRRGWNKLDAFHVCITSYQLVVHDQHSFKRKKWQYMILDEAHNIKNFKSTRWQALLNFNTRRRLLLTGTPLQNNIAELWSLLYFLMPQTALENGKISGFADLDAFQQWFGKPVDKIIAANDSEHDDETRRTVSKLHQVLRPYLLRRLKADVEKQMPAKYEHILYCRLSKRQRFLYDDFMSRAQTKATLASGNFMSIINCLMQLRKVCNHPDLFEVRPILTSFCMDRSVMSNYAHLNQLVLKNLNKHALDTVVNLQCTNLAFTQNDFNMETHYADSCARLQCVRQFSEAVEKLRKDASLPDAKDDPNVLNYQDMHEFYTGYTVRKRLRLIDQYRHTFYLNSLRCEKRPVYGINLVRLVSVHHRPPLECNVMSELMKPLETRLVTHKRIIDEFAIITPTAITLDTRVLSLGLDSEAAVHPVIKSDINTQLSRMKNPFHLLQTKLSIAFPDKSLLQYDCGKLQSLAVLLRRLKEEGHRALIFTQMTKVLDILEQFLNYHGYLYMRLDGATKIEDRQILTERFNTDPRITVFILSSRSGGLGINLTGADTVIFYDSDWNPAMDKQCQDRCHRIGQTRDVHIYRFVSEHTIESNILKKANQKRQLDNIVIQKGEFTTDYFSRLSVKDLLGSDETEEIADERPLLEDPATTADSKKLERLLAQAEDEDDVKAARLAMKEVDVDDRDFRESSTCANPSPDEDVDEEPVEDEYEGTRHVEEYMIRFIANGYLYD</sequence>
<keyword id="KW-0010">Activator</keyword>
<keyword id="KW-0067">ATP-binding</keyword>
<keyword id="KW-0156">Chromatin regulator</keyword>
<keyword id="KW-0238">DNA-binding</keyword>
<keyword id="KW-0347">Helicase</keyword>
<keyword id="KW-0378">Hydrolase</keyword>
<keyword id="KW-0547">Nucleotide-binding</keyword>
<keyword id="KW-0539">Nucleus</keyword>
<keyword id="KW-1185">Reference proteome</keyword>
<keyword id="KW-0804">Transcription</keyword>
<keyword id="KW-0805">Transcription regulation</keyword>
<protein>
    <recommendedName>
        <fullName>Helicase SWR1</fullName>
        <ecNumber>3.6.4.12</ecNumber>
    </recommendedName>
</protein>
<name>SWR1_EREGS</name>
<organism>
    <name type="scientific">Eremothecium gossypii (strain ATCC 10895 / CBS 109.51 / FGSC 9923 / NRRL Y-1056)</name>
    <name type="common">Yeast</name>
    <name type="synonym">Ashbya gossypii</name>
    <dbReference type="NCBI Taxonomy" id="284811"/>
    <lineage>
        <taxon>Eukaryota</taxon>
        <taxon>Fungi</taxon>
        <taxon>Dikarya</taxon>
        <taxon>Ascomycota</taxon>
        <taxon>Saccharomycotina</taxon>
        <taxon>Saccharomycetes</taxon>
        <taxon>Saccharomycetales</taxon>
        <taxon>Saccharomycetaceae</taxon>
        <taxon>Eremothecium</taxon>
    </lineage>
</organism>
<reference key="1">
    <citation type="journal article" date="2004" name="Science">
        <title>The Ashbya gossypii genome as a tool for mapping the ancient Saccharomyces cerevisiae genome.</title>
        <authorList>
            <person name="Dietrich F.S."/>
            <person name="Voegeli S."/>
            <person name="Brachat S."/>
            <person name="Lerch A."/>
            <person name="Gates K."/>
            <person name="Steiner S."/>
            <person name="Mohr C."/>
            <person name="Poehlmann R."/>
            <person name="Luedi P."/>
            <person name="Choi S."/>
            <person name="Wing R.A."/>
            <person name="Flavier A."/>
            <person name="Gaffney T.D."/>
            <person name="Philippsen P."/>
        </authorList>
    </citation>
    <scope>NUCLEOTIDE SEQUENCE [LARGE SCALE GENOMIC DNA]</scope>
    <source>
        <strain>ATCC 10895 / CBS 109.51 / FGSC 9923 / NRRL Y-1056</strain>
    </source>
</reference>
<reference key="2">
    <citation type="journal article" date="2013" name="G3 (Bethesda)">
        <title>Genomes of Ashbya fungi isolated from insects reveal four mating-type loci, numerous translocations, lack of transposons, and distinct gene duplications.</title>
        <authorList>
            <person name="Dietrich F.S."/>
            <person name="Voegeli S."/>
            <person name="Kuo S."/>
            <person name="Philippsen P."/>
        </authorList>
    </citation>
    <scope>GENOME REANNOTATION</scope>
    <scope>SEQUENCE REVISION TO 1066 AND 1341</scope>
    <source>
        <strain>ATCC 10895 / CBS 109.51 / FGSC 9923 / NRRL Y-1056</strain>
    </source>
</reference>
<dbReference type="EC" id="3.6.4.12"/>
<dbReference type="EMBL" id="AE016817">
    <property type="protein sequence ID" value="AAS52229.2"/>
    <property type="molecule type" value="Genomic_DNA"/>
</dbReference>
<dbReference type="RefSeq" id="NP_984405.2">
    <property type="nucleotide sequence ID" value="NM_209758.2"/>
</dbReference>
<dbReference type="SMR" id="Q759G7"/>
<dbReference type="FunCoup" id="Q759G7">
    <property type="interactions" value="245"/>
</dbReference>
<dbReference type="STRING" id="284811.Q759G7"/>
<dbReference type="EnsemblFungi" id="AAS52229">
    <property type="protein sequence ID" value="AAS52229"/>
    <property type="gene ID" value="AGOS_ADR309W"/>
</dbReference>
<dbReference type="GeneID" id="4620571"/>
<dbReference type="KEGG" id="ago:AGOS_ADR309W"/>
<dbReference type="eggNOG" id="KOG0391">
    <property type="taxonomic scope" value="Eukaryota"/>
</dbReference>
<dbReference type="HOGENOM" id="CLU_000315_24_4_1"/>
<dbReference type="InParanoid" id="Q759G7"/>
<dbReference type="OMA" id="AFQQWFG"/>
<dbReference type="OrthoDB" id="372624at2759"/>
<dbReference type="Proteomes" id="UP000000591">
    <property type="component" value="Chromosome IV"/>
</dbReference>
<dbReference type="GO" id="GO:0005829">
    <property type="term" value="C:cytosol"/>
    <property type="evidence" value="ECO:0007669"/>
    <property type="project" value="EnsemblFungi"/>
</dbReference>
<dbReference type="GO" id="GO:0000812">
    <property type="term" value="C:Swr1 complex"/>
    <property type="evidence" value="ECO:0000318"/>
    <property type="project" value="GO_Central"/>
</dbReference>
<dbReference type="GO" id="GO:0005524">
    <property type="term" value="F:ATP binding"/>
    <property type="evidence" value="ECO:0007669"/>
    <property type="project" value="UniProtKB-KW"/>
</dbReference>
<dbReference type="GO" id="GO:0016887">
    <property type="term" value="F:ATP hydrolysis activity"/>
    <property type="evidence" value="ECO:0000318"/>
    <property type="project" value="GO_Central"/>
</dbReference>
<dbReference type="GO" id="GO:0003677">
    <property type="term" value="F:DNA binding"/>
    <property type="evidence" value="ECO:0007669"/>
    <property type="project" value="UniProtKB-KW"/>
</dbReference>
<dbReference type="GO" id="GO:0004386">
    <property type="term" value="F:helicase activity"/>
    <property type="evidence" value="ECO:0007669"/>
    <property type="project" value="UniProtKB-KW"/>
</dbReference>
<dbReference type="GO" id="GO:0042393">
    <property type="term" value="F:histone binding"/>
    <property type="evidence" value="ECO:0000318"/>
    <property type="project" value="GO_Central"/>
</dbReference>
<dbReference type="GO" id="GO:0005198">
    <property type="term" value="F:structural molecule activity"/>
    <property type="evidence" value="ECO:0007669"/>
    <property type="project" value="EnsemblFungi"/>
</dbReference>
<dbReference type="GO" id="GO:0006338">
    <property type="term" value="P:chromatin remodeling"/>
    <property type="evidence" value="ECO:0000318"/>
    <property type="project" value="GO_Central"/>
</dbReference>
<dbReference type="GO" id="GO:0000725">
    <property type="term" value="P:recombinational repair"/>
    <property type="evidence" value="ECO:0007669"/>
    <property type="project" value="EnsemblFungi"/>
</dbReference>
<dbReference type="CDD" id="cd18003">
    <property type="entry name" value="DEXQc_SRCAP"/>
    <property type="match status" value="1"/>
</dbReference>
<dbReference type="CDD" id="cd18793">
    <property type="entry name" value="SF2_C_SNF"/>
    <property type="match status" value="1"/>
</dbReference>
<dbReference type="FunFam" id="3.40.50.10810:FF:000005">
    <property type="entry name" value="Photoperiod-independent early flowering 1"/>
    <property type="match status" value="1"/>
</dbReference>
<dbReference type="FunFam" id="3.40.50.300:FF:000655">
    <property type="entry name" value="Protein PHOTOPERIOD-INDEPENDENT EARLY FLOWERING 1"/>
    <property type="match status" value="1"/>
</dbReference>
<dbReference type="Gene3D" id="3.40.50.300">
    <property type="entry name" value="P-loop containing nucleotide triphosphate hydrolases"/>
    <property type="match status" value="1"/>
</dbReference>
<dbReference type="Gene3D" id="1.20.120.850">
    <property type="entry name" value="SWI2/SNF2 ATPases, N-terminal domain"/>
    <property type="match status" value="1"/>
</dbReference>
<dbReference type="Gene3D" id="3.40.50.10810">
    <property type="entry name" value="Tandem AAA-ATPase domain"/>
    <property type="match status" value="1"/>
</dbReference>
<dbReference type="InterPro" id="IPR014001">
    <property type="entry name" value="Helicase_ATP-bd"/>
</dbReference>
<dbReference type="InterPro" id="IPR001650">
    <property type="entry name" value="Helicase_C-like"/>
</dbReference>
<dbReference type="InterPro" id="IPR014012">
    <property type="entry name" value="HSA_dom"/>
</dbReference>
<dbReference type="InterPro" id="IPR050520">
    <property type="entry name" value="INO80/SWR1_helicase"/>
</dbReference>
<dbReference type="InterPro" id="IPR027417">
    <property type="entry name" value="P-loop_NTPase"/>
</dbReference>
<dbReference type="InterPro" id="IPR038718">
    <property type="entry name" value="SNF2-like_sf"/>
</dbReference>
<dbReference type="InterPro" id="IPR049730">
    <property type="entry name" value="SNF2/RAD54-like_C"/>
</dbReference>
<dbReference type="InterPro" id="IPR000330">
    <property type="entry name" value="SNF2_N"/>
</dbReference>
<dbReference type="PANTHER" id="PTHR45685:SF1">
    <property type="entry name" value="HELICASE SRCAP"/>
    <property type="match status" value="1"/>
</dbReference>
<dbReference type="PANTHER" id="PTHR45685">
    <property type="entry name" value="HELICASE SRCAP-RELATED"/>
    <property type="match status" value="1"/>
</dbReference>
<dbReference type="Pfam" id="PF00271">
    <property type="entry name" value="Helicase_C"/>
    <property type="match status" value="1"/>
</dbReference>
<dbReference type="Pfam" id="PF07529">
    <property type="entry name" value="HSA"/>
    <property type="match status" value="1"/>
</dbReference>
<dbReference type="Pfam" id="PF00176">
    <property type="entry name" value="SNF2-rel_dom"/>
    <property type="match status" value="1"/>
</dbReference>
<dbReference type="SMART" id="SM00487">
    <property type="entry name" value="DEXDc"/>
    <property type="match status" value="1"/>
</dbReference>
<dbReference type="SMART" id="SM00490">
    <property type="entry name" value="HELICc"/>
    <property type="match status" value="1"/>
</dbReference>
<dbReference type="SMART" id="SM00573">
    <property type="entry name" value="HSA"/>
    <property type="match status" value="1"/>
</dbReference>
<dbReference type="SUPFAM" id="SSF52540">
    <property type="entry name" value="P-loop containing nucleoside triphosphate hydrolases"/>
    <property type="match status" value="2"/>
</dbReference>
<dbReference type="PROSITE" id="PS51192">
    <property type="entry name" value="HELICASE_ATP_BIND_1"/>
    <property type="match status" value="1"/>
</dbReference>
<dbReference type="PROSITE" id="PS51194">
    <property type="entry name" value="HELICASE_CTER"/>
    <property type="match status" value="1"/>
</dbReference>
<dbReference type="PROSITE" id="PS51204">
    <property type="entry name" value="HSA"/>
    <property type="match status" value="1"/>
</dbReference>
<accession>Q759G7</accession>
<proteinExistence type="inferred from homology"/>
<comment type="function">
    <text evidence="1">Catalytic component of the SWR1 complex which mediates the ATP-dependent exchange of histone H2A for the H2A variant HZT1 leading to transcriptional regulation of selected genes by chromatin remodeling.</text>
</comment>
<comment type="catalytic activity">
    <reaction>
        <text>ATP + H2O = ADP + phosphate + H(+)</text>
        <dbReference type="Rhea" id="RHEA:13065"/>
        <dbReference type="ChEBI" id="CHEBI:15377"/>
        <dbReference type="ChEBI" id="CHEBI:15378"/>
        <dbReference type="ChEBI" id="CHEBI:30616"/>
        <dbReference type="ChEBI" id="CHEBI:43474"/>
        <dbReference type="ChEBI" id="CHEBI:456216"/>
        <dbReference type="EC" id="3.6.4.12"/>
    </reaction>
</comment>
<comment type="subunit">
    <text evidence="1">Component of the SWR1 chromatin-remodeling complex.</text>
</comment>
<comment type="subcellular location">
    <subcellularLocation>
        <location evidence="4">Nucleus</location>
    </subcellularLocation>
</comment>
<comment type="similarity">
    <text evidence="6">Belongs to the SNF2/RAD54 helicase family. SWR1 subfamily.</text>
</comment>
<evidence type="ECO:0000250" key="1"/>
<evidence type="ECO:0000255" key="2">
    <source>
        <dbReference type="PROSITE-ProRule" id="PRU00541"/>
    </source>
</evidence>
<evidence type="ECO:0000255" key="3">
    <source>
        <dbReference type="PROSITE-ProRule" id="PRU00542"/>
    </source>
</evidence>
<evidence type="ECO:0000255" key="4">
    <source>
        <dbReference type="PROSITE-ProRule" id="PRU00549"/>
    </source>
</evidence>
<evidence type="ECO:0000256" key="5">
    <source>
        <dbReference type="SAM" id="MobiDB-lite"/>
    </source>
</evidence>
<evidence type="ECO:0000305" key="6"/>
<feature type="chain" id="PRO_0000074362" description="Helicase SWR1">
    <location>
        <begin position="1"/>
        <end position="1486"/>
    </location>
</feature>
<feature type="domain" description="HSA" evidence="4">
    <location>
        <begin position="321"/>
        <end position="393"/>
    </location>
</feature>
<feature type="domain" description="Helicase ATP-binding" evidence="2">
    <location>
        <begin position="683"/>
        <end position="848"/>
    </location>
</feature>
<feature type="domain" description="Helicase C-terminal" evidence="3">
    <location>
        <begin position="1221"/>
        <end position="1371"/>
    </location>
</feature>
<feature type="region of interest" description="Disordered" evidence="5">
    <location>
        <begin position="63"/>
        <end position="89"/>
    </location>
</feature>
<feature type="region of interest" description="Disordered" evidence="5">
    <location>
        <begin position="113"/>
        <end position="219"/>
    </location>
</feature>
<feature type="region of interest" description="Disordered" evidence="5">
    <location>
        <begin position="446"/>
        <end position="492"/>
    </location>
</feature>
<feature type="region of interest" description="Disordered" evidence="5">
    <location>
        <begin position="508"/>
        <end position="530"/>
    </location>
</feature>
<feature type="region of interest" description="Disordered" evidence="5">
    <location>
        <begin position="548"/>
        <end position="590"/>
    </location>
</feature>
<feature type="region of interest" description="Disordered" evidence="5">
    <location>
        <begin position="606"/>
        <end position="628"/>
    </location>
</feature>
<feature type="region of interest" description="Disordered" evidence="5">
    <location>
        <begin position="1436"/>
        <end position="1468"/>
    </location>
</feature>
<feature type="short sequence motif" description="DEAH box">
    <location>
        <begin position="799"/>
        <end position="802"/>
    </location>
</feature>
<feature type="compositionally biased region" description="Basic and acidic residues" evidence="5">
    <location>
        <begin position="148"/>
        <end position="163"/>
    </location>
</feature>
<feature type="compositionally biased region" description="Polar residues" evidence="5">
    <location>
        <begin position="164"/>
        <end position="173"/>
    </location>
</feature>
<feature type="compositionally biased region" description="Basic and acidic residues" evidence="5">
    <location>
        <begin position="174"/>
        <end position="190"/>
    </location>
</feature>
<feature type="compositionally biased region" description="Low complexity" evidence="5">
    <location>
        <begin position="193"/>
        <end position="204"/>
    </location>
</feature>
<feature type="compositionally biased region" description="Acidic residues" evidence="5">
    <location>
        <begin position="467"/>
        <end position="487"/>
    </location>
</feature>
<feature type="compositionally biased region" description="Polar residues" evidence="5">
    <location>
        <begin position="511"/>
        <end position="523"/>
    </location>
</feature>
<feature type="compositionally biased region" description="Low complexity" evidence="5">
    <location>
        <begin position="562"/>
        <end position="588"/>
    </location>
</feature>
<feature type="compositionally biased region" description="Acidic residues" evidence="5">
    <location>
        <begin position="1452"/>
        <end position="1465"/>
    </location>
</feature>
<feature type="binding site" evidence="2">
    <location>
        <begin position="696"/>
        <end position="703"/>
    </location>
    <ligand>
        <name>ATP</name>
        <dbReference type="ChEBI" id="CHEBI:30616"/>
    </ligand>
</feature>
<gene>
    <name type="primary">SWR1</name>
    <name type="ordered locus">ADR309W</name>
</gene>